<evidence type="ECO:0000250" key="1"/>
<evidence type="ECO:0000250" key="2">
    <source>
        <dbReference type="UniProtKB" id="O70507"/>
    </source>
</evidence>
<evidence type="ECO:0000250" key="3">
    <source>
        <dbReference type="UniProtKB" id="Q9JKA7"/>
    </source>
</evidence>
<evidence type="ECO:0000250" key="4">
    <source>
        <dbReference type="UniProtKB" id="Q9TV66"/>
    </source>
</evidence>
<evidence type="ECO:0000255" key="5"/>
<evidence type="ECO:0000256" key="6">
    <source>
        <dbReference type="SAM" id="MobiDB-lite"/>
    </source>
</evidence>
<evidence type="ECO:0000269" key="7">
    <source>
    </source>
</evidence>
<evidence type="ECO:0000269" key="8">
    <source>
    </source>
</evidence>
<evidence type="ECO:0000269" key="9">
    <source>
    </source>
</evidence>
<evidence type="ECO:0000269" key="10">
    <source>
    </source>
</evidence>
<evidence type="ECO:0000269" key="11">
    <source>
    </source>
</evidence>
<evidence type="ECO:0000269" key="12">
    <source>
    </source>
</evidence>
<evidence type="ECO:0000269" key="13">
    <source>
    </source>
</evidence>
<evidence type="ECO:0000269" key="14">
    <source>
    </source>
</evidence>
<evidence type="ECO:0000269" key="15">
    <source>
    </source>
</evidence>
<evidence type="ECO:0000269" key="16">
    <source>
    </source>
</evidence>
<evidence type="ECO:0000269" key="17">
    <source>
    </source>
</evidence>
<evidence type="ECO:0000269" key="18">
    <source>
    </source>
</evidence>
<evidence type="ECO:0000269" key="19">
    <source>
    </source>
</evidence>
<evidence type="ECO:0000269" key="20">
    <source ref="10"/>
</evidence>
<evidence type="ECO:0000305" key="21"/>
<evidence type="ECO:0000305" key="22">
    <source>
    </source>
</evidence>
<evidence type="ECO:0000312" key="23">
    <source>
        <dbReference type="HGNC" id="HGNC:16882"/>
    </source>
</evidence>
<evidence type="ECO:0007744" key="24">
    <source>
        <dbReference type="PDB" id="3OTF"/>
    </source>
</evidence>
<evidence type="ECO:0007744" key="25">
    <source>
        <dbReference type="PDB" id="3U11"/>
    </source>
</evidence>
<evidence type="ECO:0007744" key="26">
    <source>
        <dbReference type="PDB" id="4HBN"/>
    </source>
</evidence>
<evidence type="ECO:0007744" key="27">
    <source>
        <dbReference type="PDB" id="4KL1"/>
    </source>
</evidence>
<evidence type="ECO:0007744" key="28">
    <source>
        <dbReference type="PDB" id="6GYN"/>
    </source>
</evidence>
<evidence type="ECO:0007744" key="29">
    <source>
        <dbReference type="PDB" id="6GYO"/>
    </source>
</evidence>
<evidence type="ECO:0007829" key="30">
    <source>
        <dbReference type="PDB" id="3OTF"/>
    </source>
</evidence>
<evidence type="ECO:0007829" key="31">
    <source>
        <dbReference type="PDB" id="4KL1"/>
    </source>
</evidence>
<evidence type="ECO:0007829" key="32">
    <source>
        <dbReference type="PDB" id="6GYN"/>
    </source>
</evidence>
<evidence type="ECO:0007829" key="33">
    <source>
        <dbReference type="PDB" id="6GYO"/>
    </source>
</evidence>
<feature type="chain" id="PRO_0000054117" description="Potassium/sodium hyperpolarization-activated cyclic nucleotide-gated channel 4">
    <location>
        <begin position="1"/>
        <end position="1203"/>
    </location>
</feature>
<feature type="topological domain" description="Cytoplasmic" evidence="21">
    <location>
        <begin position="1"/>
        <end position="263"/>
    </location>
</feature>
<feature type="transmembrane region" description="Helical; Name=Segment S1" evidence="20 28">
    <location>
        <begin position="264"/>
        <end position="286"/>
    </location>
</feature>
<feature type="topological domain" description="Extracellular" evidence="21">
    <location>
        <begin position="287"/>
        <end position="293"/>
    </location>
</feature>
<feature type="transmembrane region" description="Helical; Name=Segment S2" evidence="20 28">
    <location>
        <begin position="294"/>
        <end position="314"/>
    </location>
</feature>
<feature type="topological domain" description="Cytoplasmic" evidence="21">
    <location>
        <begin position="315"/>
        <end position="336"/>
    </location>
</feature>
<feature type="transmembrane region" description="Helical; Name=Segment S3" evidence="20 28">
    <location>
        <begin position="337"/>
        <end position="359"/>
    </location>
</feature>
<feature type="topological domain" description="Extracellular" evidence="21">
    <location>
        <begin position="360"/>
        <end position="378"/>
    </location>
</feature>
<feature type="transmembrane region" description="Helical; Voltage-sensor; Name=Segment S4" evidence="20 28">
    <location>
        <begin position="379"/>
        <end position="399"/>
    </location>
</feature>
<feature type="topological domain" description="Cytoplasmic" evidence="21">
    <location>
        <begin position="400"/>
        <end position="413"/>
    </location>
</feature>
<feature type="transmembrane region" description="Helical; Name=Segment S5" evidence="20 28">
    <location>
        <begin position="414"/>
        <end position="436"/>
    </location>
</feature>
<feature type="topological domain" description="Extracellular" evidence="21">
    <location>
        <begin position="437"/>
        <end position="464"/>
    </location>
</feature>
<feature type="intramembrane region" description="Pore-forming; Name=Segment H5" evidence="21">
    <location>
        <begin position="465"/>
        <end position="486"/>
    </location>
</feature>
<feature type="topological domain" description="Extracellular" evidence="21">
    <location>
        <begin position="487"/>
        <end position="491"/>
    </location>
</feature>
<feature type="transmembrane region" description="Helical; Name=Segment S6" evidence="20 28">
    <location>
        <begin position="492"/>
        <end position="517"/>
    </location>
</feature>
<feature type="topological domain" description="Cytoplasmic" evidence="21">
    <location>
        <begin position="518"/>
        <end position="1203"/>
    </location>
</feature>
<feature type="region of interest" description="Disordered" evidence="6">
    <location>
        <begin position="1"/>
        <end position="182"/>
    </location>
</feature>
<feature type="region of interest" description="Involved in subunit assembly" evidence="1">
    <location>
        <begin position="209"/>
        <end position="260"/>
    </location>
</feature>
<feature type="region of interest" description="Disordered" evidence="6">
    <location>
        <begin position="836"/>
        <end position="856"/>
    </location>
</feature>
<feature type="region of interest" description="Disordered" evidence="6">
    <location>
        <begin position="870"/>
        <end position="897"/>
    </location>
</feature>
<feature type="region of interest" description="Disordered" evidence="6">
    <location>
        <begin position="918"/>
        <end position="1203"/>
    </location>
</feature>
<feature type="compositionally biased region" description="Acidic residues" evidence="6">
    <location>
        <begin position="26"/>
        <end position="36"/>
    </location>
</feature>
<feature type="compositionally biased region" description="Gly residues" evidence="6">
    <location>
        <begin position="105"/>
        <end position="117"/>
    </location>
</feature>
<feature type="compositionally biased region" description="Basic and acidic residues" evidence="6">
    <location>
        <begin position="121"/>
        <end position="133"/>
    </location>
</feature>
<feature type="compositionally biased region" description="Pro residues" evidence="6">
    <location>
        <begin position="163"/>
        <end position="174"/>
    </location>
</feature>
<feature type="compositionally biased region" description="Low complexity" evidence="6">
    <location>
        <begin position="918"/>
        <end position="941"/>
    </location>
</feature>
<feature type="compositionally biased region" description="Low complexity" evidence="6">
    <location>
        <begin position="966"/>
        <end position="986"/>
    </location>
</feature>
<feature type="compositionally biased region" description="Pro residues" evidence="6">
    <location>
        <begin position="995"/>
        <end position="1004"/>
    </location>
</feature>
<feature type="compositionally biased region" description="Low complexity" evidence="6">
    <location>
        <begin position="1005"/>
        <end position="1028"/>
    </location>
</feature>
<feature type="compositionally biased region" description="Pro residues" evidence="6">
    <location>
        <begin position="1029"/>
        <end position="1042"/>
    </location>
</feature>
<feature type="compositionally biased region" description="Low complexity" evidence="6">
    <location>
        <begin position="1045"/>
        <end position="1056"/>
    </location>
</feature>
<feature type="compositionally biased region" description="Gly residues" evidence="6">
    <location>
        <begin position="1122"/>
        <end position="1137"/>
    </location>
</feature>
<feature type="binding site" evidence="17 27">
    <location>
        <position position="559"/>
    </location>
    <ligand>
        <name>3',5'-cyclic GMP</name>
        <dbReference type="ChEBI" id="CHEBI:57746"/>
    </ligand>
</feature>
<feature type="binding site" evidence="17 27">
    <location>
        <position position="562"/>
    </location>
    <ligand>
        <name>3',5'-cyclic GMP</name>
        <dbReference type="ChEBI" id="CHEBI:57746"/>
    </ligand>
</feature>
<feature type="binding site" evidence="17 27">
    <location>
        <position position="564"/>
    </location>
    <ligand>
        <name>3',5'-cyclic GMP</name>
        <dbReference type="ChEBI" id="CHEBI:57746"/>
    </ligand>
</feature>
<feature type="binding site" evidence="17 27">
    <location>
        <position position="566"/>
    </location>
    <ligand>
        <name>3',5'-cyclic GMP</name>
        <dbReference type="ChEBI" id="CHEBI:57746"/>
    </ligand>
</feature>
<feature type="binding site" evidence="15 16 25 26">
    <location>
        <position position="659"/>
    </location>
    <ligand>
        <name>3',5'-cyclic AMP</name>
        <dbReference type="ChEBI" id="CHEBI:58165"/>
    </ligand>
</feature>
<feature type="binding site" evidence="4">
    <location>
        <position position="660"/>
    </location>
    <ligand>
        <name>3',5'-cyclic AMP</name>
        <dbReference type="ChEBI" id="CHEBI:58165"/>
    </ligand>
</feature>
<feature type="binding site" evidence="15 25">
    <location>
        <position position="662"/>
    </location>
    <ligand>
        <name>3',5'-cyclic AMP</name>
        <dbReference type="ChEBI" id="CHEBI:58165"/>
    </ligand>
</feature>
<feature type="binding site" evidence="15 16 25 26">
    <location>
        <position position="669"/>
    </location>
    <ligand>
        <name>3',5'-cyclic AMP</name>
        <dbReference type="ChEBI" id="CHEBI:58165"/>
    </ligand>
</feature>
<feature type="binding site" evidence="15 16 25 26">
    <location>
        <position position="670"/>
    </location>
    <ligand>
        <name>3',5'-cyclic AMP</name>
        <dbReference type="ChEBI" id="CHEBI:58165"/>
    </ligand>
</feature>
<feature type="binding site" evidence="4">
    <location>
        <position position="673"/>
    </location>
    <ligand>
        <name>3',5'-cyclic AMP</name>
        <dbReference type="ChEBI" id="CHEBI:58165"/>
    </ligand>
</feature>
<feature type="binding site" evidence="16 26">
    <location>
        <position position="710"/>
    </location>
    <ligand>
        <name>3',5'-cyclic AMP</name>
        <dbReference type="ChEBI" id="CHEBI:58165"/>
    </ligand>
</feature>
<feature type="modified residue" description="Phosphoserine" evidence="3">
    <location>
        <position position="138"/>
    </location>
</feature>
<feature type="modified residue" description="Phosphoserine" evidence="2">
    <location>
        <position position="1105"/>
    </location>
</feature>
<feature type="modified residue" description="Phosphoserine" evidence="2">
    <location>
        <position position="1108"/>
    </location>
</feature>
<feature type="glycosylation site" description="N-linked (GlcNAc...) asparagine" evidence="5">
    <location>
        <position position="458"/>
    </location>
</feature>
<feature type="sequence variant" id="VAR_066614" description="In SSS2; results in a significant reduction of current density compared to wild-type; dbSNP:rs1454748709." evidence="13">
    <original>A</original>
    <variation>V</variation>
    <location>
        <position position="485"/>
    </location>
</feature>
<feature type="sequence variant" id="VAR_086273" description="Risk factor for EIG18; alters the channel kinetics by causing a leftward shift in the voltage dependence of the channel activation curve; neurons expressing mutant channels present lower current thresholds to firing and higher firing rates; dbSNP:rs150691273." evidence="19">
    <original>R</original>
    <variation>C</variation>
    <location>
        <position position="550"/>
    </location>
</feature>
<feature type="sequence variant" id="VAR_026534" description="In SSS2; dbSNP:rs104894485." evidence="10">
    <original>D</original>
    <variation>N</variation>
    <location>
        <position position="553"/>
    </location>
</feature>
<feature type="sequence variant" id="VAR_026535" description="In SSS2; results in decreased affinity for cAMP but does not abolish channel activation; shifts the current activation range to hyperpolarized voltages; slows channel opening and speeds up channel closure; dbSNP:rs104894488." evidence="11 16">
    <original>S</original>
    <variation>R</variation>
    <location>
        <position position="672"/>
    </location>
</feature>
<feature type="mutagenesis site" description="Alters the channel response to c-di-GMP." evidence="17">
    <original>Y</original>
    <variation>T</variation>
    <location>
        <position position="559"/>
    </location>
</feature>
<feature type="mutagenesis site" description="Alters the channel response to c-di-GMP." evidence="17">
    <original>F</original>
    <variation>T</variation>
    <location>
        <position position="564"/>
    </location>
</feature>
<feature type="mutagenesis site" description="Alters the channel response to c-di-GMP." evidence="17">
    <original>E</original>
    <variation>K</variation>
    <location>
        <position position="566"/>
    </location>
</feature>
<feature type="mutagenesis site" description="Abolishes cyclic-dinucleotide modulation of HCN4 channels." evidence="17">
    <original>R</original>
    <variation>E</variation>
    <location>
        <position position="680"/>
    </location>
</feature>
<feature type="sequence conflict" description="In Ref. 2; CAB52754." evidence="21" ref="2">
    <original>S</original>
    <variation>T</variation>
    <location>
        <position position="110"/>
    </location>
</feature>
<feature type="helix" evidence="32">
    <location>
        <begin position="217"/>
        <end position="221"/>
    </location>
</feature>
<feature type="helix" evidence="32">
    <location>
        <begin position="228"/>
        <end position="233"/>
    </location>
</feature>
<feature type="strand" evidence="32">
    <location>
        <begin position="234"/>
        <end position="236"/>
    </location>
</feature>
<feature type="helix" evidence="32">
    <location>
        <begin position="237"/>
        <end position="248"/>
    </location>
</feature>
<feature type="strand" evidence="32">
    <location>
        <begin position="251"/>
        <end position="253"/>
    </location>
</feature>
<feature type="helix" evidence="32">
    <location>
        <begin position="260"/>
        <end position="285"/>
    </location>
</feature>
<feature type="helix" evidence="32">
    <location>
        <begin position="293"/>
        <end position="312"/>
    </location>
</feature>
<feature type="helix" evidence="32">
    <location>
        <begin position="313"/>
        <end position="315"/>
    </location>
</feature>
<feature type="strand" evidence="33">
    <location>
        <begin position="324"/>
        <end position="327"/>
    </location>
</feature>
<feature type="helix" evidence="32">
    <location>
        <begin position="330"/>
        <end position="340"/>
    </location>
</feature>
<feature type="helix" evidence="32">
    <location>
        <begin position="342"/>
        <end position="349"/>
    </location>
</feature>
<feature type="helix" evidence="32">
    <location>
        <begin position="352"/>
        <end position="363"/>
    </location>
</feature>
<feature type="turn" evidence="32">
    <location>
        <begin position="365"/>
        <end position="368"/>
    </location>
</feature>
<feature type="helix" evidence="32">
    <location>
        <begin position="372"/>
        <end position="383"/>
    </location>
</feature>
<feature type="helix" evidence="32">
    <location>
        <begin position="384"/>
        <end position="390"/>
    </location>
</feature>
<feature type="helix" evidence="32">
    <location>
        <begin position="391"/>
        <end position="409"/>
    </location>
</feature>
<feature type="helix" evidence="32">
    <location>
        <begin position="413"/>
        <end position="442"/>
    </location>
</feature>
<feature type="helix" evidence="32">
    <location>
        <begin position="450"/>
        <end position="453"/>
    </location>
</feature>
<feature type="strand" evidence="32">
    <location>
        <begin position="457"/>
        <end position="459"/>
    </location>
</feature>
<feature type="helix" evidence="32">
    <location>
        <begin position="461"/>
        <end position="474"/>
    </location>
</feature>
<feature type="turn" evidence="32">
    <location>
        <begin position="475"/>
        <end position="478"/>
    </location>
</feature>
<feature type="strand" evidence="32">
    <location>
        <begin position="482"/>
        <end position="484"/>
    </location>
</feature>
<feature type="helix" evidence="32">
    <location>
        <begin position="489"/>
        <end position="517"/>
    </location>
</feature>
<feature type="turn" evidence="32">
    <location>
        <begin position="518"/>
        <end position="520"/>
    </location>
</feature>
<feature type="helix" evidence="30">
    <location>
        <begin position="522"/>
        <end position="540"/>
    </location>
</feature>
<feature type="helix" evidence="30">
    <location>
        <begin position="545"/>
        <end position="559"/>
    </location>
</feature>
<feature type="helix" evidence="30">
    <location>
        <begin position="566"/>
        <end position="571"/>
    </location>
</feature>
<feature type="helix" evidence="30">
    <location>
        <begin position="575"/>
        <end position="585"/>
    </location>
</feature>
<feature type="helix" evidence="30">
    <location>
        <begin position="587"/>
        <end position="591"/>
    </location>
</feature>
<feature type="helix" evidence="30">
    <location>
        <begin position="594"/>
        <end position="597"/>
    </location>
</feature>
<feature type="helix" evidence="30">
    <location>
        <begin position="601"/>
        <end position="608"/>
    </location>
</feature>
<feature type="strand" evidence="30">
    <location>
        <begin position="612"/>
        <end position="616"/>
    </location>
</feature>
<feature type="strand" evidence="30">
    <location>
        <begin position="621"/>
        <end position="623"/>
    </location>
</feature>
<feature type="strand" evidence="30">
    <location>
        <begin position="631"/>
        <end position="637"/>
    </location>
</feature>
<feature type="strand" evidence="30">
    <location>
        <begin position="640"/>
        <end position="643"/>
    </location>
</feature>
<feature type="strand" evidence="30">
    <location>
        <begin position="645"/>
        <end position="647"/>
    </location>
</feature>
<feature type="strand" evidence="30">
    <location>
        <begin position="650"/>
        <end position="652"/>
    </location>
</feature>
<feature type="helix" evidence="30">
    <location>
        <begin position="661"/>
        <end position="665"/>
    </location>
</feature>
<feature type="strand" evidence="31">
    <location>
        <begin position="666"/>
        <end position="668"/>
    </location>
</feature>
<feature type="strand" evidence="30">
    <location>
        <begin position="670"/>
        <end position="677"/>
    </location>
</feature>
<feature type="strand" evidence="30">
    <location>
        <begin position="679"/>
        <end position="685"/>
    </location>
</feature>
<feature type="helix" evidence="30">
    <location>
        <begin position="686"/>
        <end position="695"/>
    </location>
</feature>
<feature type="helix" evidence="30">
    <location>
        <begin position="697"/>
        <end position="699"/>
    </location>
</feature>
<feature type="helix" evidence="30">
    <location>
        <begin position="700"/>
        <end position="712"/>
    </location>
</feature>
<name>HCN4_HUMAN</name>
<proteinExistence type="evidence at protein level"/>
<organism>
    <name type="scientific">Homo sapiens</name>
    <name type="common">Human</name>
    <dbReference type="NCBI Taxonomy" id="9606"/>
    <lineage>
        <taxon>Eukaryota</taxon>
        <taxon>Metazoa</taxon>
        <taxon>Chordata</taxon>
        <taxon>Craniata</taxon>
        <taxon>Vertebrata</taxon>
        <taxon>Euteleostomi</taxon>
        <taxon>Mammalia</taxon>
        <taxon>Eutheria</taxon>
        <taxon>Euarchontoglires</taxon>
        <taxon>Primates</taxon>
        <taxon>Haplorrhini</taxon>
        <taxon>Catarrhini</taxon>
        <taxon>Hominidae</taxon>
        <taxon>Homo</taxon>
    </lineage>
</organism>
<sequence length="1203" mass="129042">MDKLPPSMRKRLYSLPQQVGAKAWIMDEEEDAEEEGAGGRQDPSRRSIRLRPLPSPSPSAAAGGTESRSSALGAADSEGPARGAGKSSTNGDCRRFRGSLASLGSRGGGSGGTGSGSSHGHLHDSAEERRLIAEGDASPGEDRTPPGLAAEPERPGASAQPAASPPPPQQPPQPASASCEQPSVDTAIKVEGGAAAGDQILPEAEVRLGQAGFMQRQFGAMLQPGVNKFSLRMFGSQKAVEREQERVKSAGFWIIHPYSDFRFYWDLTMLLLMVGNLIIIPVGITFFKDENTTPWIVFNVVSDTFFLIDLVLNFRTGIVVEDNTEIILDPQRIKMKYLKSWFMVDFISSIPVDYIFLIVETRIDSEVYKTARALRIVRFTKILSLLRLLRLSRLIRYIHQWEEIFHMTYDLASAVVRIVNLIGMMLLLCHWDGCLQFLVPMLQDFPDDCWVSINNMVNNSWGKQYSYALFKAMSHMLCIGYGRQAPVGMSDVWLTMLSMIVGATCYAMFIGHATALIQSLDSSRRQYQEKYKQVEQYMSFHKLPPDTRQRIHDYYEHRYQGKMFDEESILGELSEPLREEIINFNCRKLVASMPLFANADPNFVTSMLTKLRFEVFQPGDYIIREGTIGKKMYFIQHGVVSVLTKGNKETKLADGSYFGEICLLTRGRRTASVRADTYCRLYSLSVDNFNEVLEEYPMMRRAFETVALDRLDRIGKKNSILLHKVQHDLNSGVFNYQENEIIQQIVQHDREMAHCAHRVQAAASATPTPTPVIWTPLIQAPLQAAAATTSVAIALTHHPRLPAAIFRPPPGSGLGNLGAGQTPRHLKRLQSLIPSALGSASPASSPSQVDTPSSSSFHIQQLAGFSAPAGLSPLLPSSSSSPPPGACGSPSAPTPSAGVAATTIAGFGHFHKALGGSLSSSDSPLLTPLQPGARSPQAAQPSPAPPGARGGLGLPEHFLPPPPSSRSPSSSPGQLGQPPGELSLGLATGPLSTPETPPRQPEPPSLVAGASGGASPVGFTPRGGLSPPGHSPGPPRTFPSAPPRASGSHGSLLLPPASSPPPPQVPQRRGTPPLTPGRLTQDLKLISASQPALPQDGAQTLRRASPHSSGESMAAFPLFPRAGGGSGGSGSSGGLGPPGRPYGAIPGQHVTLPRKTSSGSLPPPLSLFGARATSSGGPPLTAGPQREPGARPEPVRSKLPSNL</sequence>
<comment type="function">
    <text evidence="3 7 8 11 12 14 22">Hyperpolarization-activated ion channel that are permeable to Na(+) and K(+) ions with very slow activation and inactivation (PubMed:10228147, PubMed:10430953, PubMed:20829353). Exhibits higher selectivity for K(+) over Na(+) ions (PubMed:10228147). Contributes to the native pacemaker currents in heart (If) that regulate the rhythm of heart beat (Probable) (PubMed:10228147, PubMed:16407510, PubMed:19165230). Contributes to the native pacemaker currents in neurons (Ih) (Probable). May mediate responses to sour stimuli (By similarity).</text>
</comment>
<comment type="catalytic activity">
    <reaction evidence="7">
        <text>K(+)(in) = K(+)(out)</text>
        <dbReference type="Rhea" id="RHEA:29463"/>
        <dbReference type="ChEBI" id="CHEBI:29103"/>
    </reaction>
</comment>
<comment type="catalytic activity">
    <reaction evidence="7">
        <text>Na(+)(in) = Na(+)(out)</text>
        <dbReference type="Rhea" id="RHEA:34963"/>
        <dbReference type="ChEBI" id="CHEBI:29101"/>
    </reaction>
</comment>
<comment type="activity regulation">
    <text evidence="2 7 8 11 14 15 17">Activated by cAMP and to a lesser extent by cGMP and cCMP (PubMed:10228147, PubMed:10430953, PubMed:16407510, PubMed:20829353, PubMed:22006928, PubMed:24776929). cAMP binding causes a conformation change that leads to the assembly of an active tetramer and channel opening. Binding of cAMP removes a tonic inhibition conferred by cyclic nucleotide-binding domain (CNBD) on channel opening. Cyclic dinucleotides can modulate HCN4 channel; cyclic dinucleotides acting as potent antagonists of cAMP (PubMed:24776929). Inhibited by extracellular Cs(+) ions (PubMed:10228147). Auxiliary subunits can also regulate HCN4 channel. IRAG1 causes a gain-of-function by shifting HCN4 activation to more depolarized membrane potentials in the absence of cAMP. In contrast, IRAG2 causes a loss-of-function by inhibiting cAMP-dependent potentiation of HCN4 activation (By similarity).</text>
</comment>
<comment type="subunit">
    <text evidence="2 4 9 14 15 17 20">Homotetramer (PubMed:20829353, PubMed:22006928, PubMed:24776929, Ref.10). The channel assemble into homotetramers or heteromeric complexes that contains of four pore-forming subunits (PubMed:12928435). Interacts with PEX5L with a 4:4 HCN4:PEX5L stoichiometry; reduces the effects of cAMP on the voltage-dependence and rate of activation (By similarity). Interacts with IRAG1; regulates HCN4 channel activity (By similarity). Interacts with IRAG2; regulates HCN4 channel activity (By similarity).</text>
</comment>
<comment type="interaction">
    <interactant intactId="EBI-1753521">
        <id>Q9Y3Q4</id>
    </interactant>
    <interactant intactId="EBI-11173743">
        <id>O60741</id>
        <label>HCN1</label>
    </interactant>
    <organismsDiffer>false</organismsDiffer>
    <experiments>8</experiments>
</comment>
<comment type="interaction">
    <interactant intactId="EBI-1753521">
        <id>Q9Y3Q4</id>
    </interactant>
    <interactant intactId="EBI-1753521">
        <id>Q9Y3Q4</id>
        <label>HCN4</label>
    </interactant>
    <organismsDiffer>false</organismsDiffer>
    <experiments>3</experiments>
</comment>
<comment type="subcellular location">
    <subcellularLocation>
        <location evidence="7 8 11">Cell membrane</location>
        <topology evidence="20">Multi-pass membrane protein</topology>
    </subcellularLocation>
</comment>
<comment type="tissue specificity">
    <text evidence="7 8">Highly expressed in thalamus, testis and in heart, both in ventricle and atrium. Detected at much lower levels in amygdala, substantia nigra, cerebellum and hippocampus.</text>
</comment>
<comment type="domain">
    <text evidence="17">Contains six transmembrane segments (S1-S6) and an intervening P-loop. The segment S4 is the voltage-sensor and is characterized by a series of positively charged amino acids at every third position, while the S5-S6 segments together with the P-loop form a centrally located pore of the channel. Contains a cyclic nucleotide-binding domain (CNBD) in their C-terminal region. The CNBD is connected to the pore forming transmembrane segment via the C-linker.</text>
</comment>
<comment type="domain">
    <text evidence="17">Contains a unique pocket located in the cytosolic C-terminal domain, identified as a likely binding site for di-cyclic nucleotides.</text>
</comment>
<comment type="PTM">
    <text evidence="18">S-palmitoylated.</text>
</comment>
<comment type="disease" evidence="10 11 13 16">
    <disease id="DI-01029">
        <name>Sick sinus syndrome 2</name>
        <acronym>SSS2</acronym>
        <description>The term 'sick sinus syndrome' encompasses a variety of conditions caused by sinus node dysfunction. The most common clinical manifestations are syncope, presyncope, dizziness, and fatigue. Electrocardiogram typically shows sinus bradycardia, sinus arrest, and/or sinoatrial block. Episodes of atrial tachycardias coexisting with sinus bradycardia ('tachycardia-bradycardia syndrome') are also common in this disorder. SSS occurs most often in the elderly associated with underlying heart disease or previous cardiac surgery, but can also occur in the fetus, infant, or child without heart disease or other contributing factors. SSS2 onset is in utero or at birth.</description>
        <dbReference type="MIM" id="163800"/>
    </disease>
    <text>The disease is caused by variants affecting the gene represented in this entry.</text>
</comment>
<comment type="disease" evidence="12">
    <disease id="DI-02557">
        <name>Brugada syndrome 8</name>
        <acronym>BRGDA8</acronym>
        <description>A tachyarrhythmia characterized by right bundle branch block and ST segment elevation on an electrocardiogram (ECG). It can cause the ventricles to beat so fast that the blood is prevented from circulating efficiently in the body. When this situation occurs, the individual will faint and may die in a few minutes if the heart is not reset.</description>
        <dbReference type="MIM" id="613123"/>
    </disease>
    <text>The gene represented in this entry may be involved in disease pathogenesis.</text>
</comment>
<comment type="disease" evidence="19">
    <disease id="DI-06223">
        <name>Epilepsy, idiopathic generalized 18</name>
        <acronym>EIG18</acronym>
        <description>An autosomal dominant form of idiopathic generalized epilepsy, a disorder characterized by recurring generalized seizures in the absence of detectable brain lesions and/or metabolic abnormalities. Generalized seizures arise diffusely and simultaneously from both hemispheres of the brain. Seizure types include juvenile myoclonic seizures, absence seizures, and generalized tonic-clonic seizures. EIG18 is characterized by onset of myoclonic seizures in infancy. Although the seizures remit, some patients may have later speech or cognitive impairment.</description>
        <dbReference type="MIM" id="619521"/>
    </disease>
    <text>Disease susceptibility is associated with variants affecting the gene represented in this entry.</text>
</comment>
<comment type="similarity">
    <text evidence="21">Belongs to the potassium channel HCN family.</text>
</comment>
<gene>
    <name evidence="23" type="primary">HCN4</name>
</gene>
<reference key="1">
    <citation type="journal article" date="1999" name="EMBO J.">
        <title>Two pacemaker channels from human heart with profoundly different activation kinetics.</title>
        <authorList>
            <person name="Ludwig A."/>
            <person name="Zong X."/>
            <person name="Stieber J."/>
            <person name="Hullin R."/>
            <person name="Hofmann F."/>
            <person name="Biel M."/>
        </authorList>
    </citation>
    <scope>NUCLEOTIDE SEQUENCE [MRNA]</scope>
    <scope>FUNCTION</scope>
    <scope>TRANSPORTER ACTIVITY</scope>
    <scope>ACTIVITY REGULATION</scope>
    <scope>SUBCELLULAR LOCATION</scope>
    <scope>TISSUE SPECIFICITY</scope>
    <source>
        <tissue>Heart</tissue>
    </source>
</reference>
<reference key="2">
    <citation type="journal article" date="1999" name="Proc. Natl. Acad. Sci. U.S.A.">
        <title>Molecular characterization of a slowly gating human hyperpolarization-activated channel predominantly expressed in thalamus, heart, and testis.</title>
        <authorList>
            <person name="Seifert R."/>
            <person name="Scholten A."/>
            <person name="Gauss R."/>
            <person name="Mincheva A."/>
            <person name="Lichter P."/>
            <person name="Kaupp U.B."/>
        </authorList>
    </citation>
    <scope>NUCLEOTIDE SEQUENCE [MRNA]</scope>
    <scope>FUNCTION</scope>
    <scope>SUBCELLULAR LOCATION</scope>
    <scope>TISSUE SPECIFICITY</scope>
    <scope>ACTIVITY REGULATION</scope>
    <source>
        <tissue>Thalamus</tissue>
    </source>
</reference>
<reference key="3">
    <citation type="journal article" date="2006" name="Nature">
        <title>Analysis of the DNA sequence and duplication history of human chromosome 15.</title>
        <authorList>
            <person name="Zody M.C."/>
            <person name="Garber M."/>
            <person name="Sharpe T."/>
            <person name="Young S.K."/>
            <person name="Rowen L."/>
            <person name="O'Neill K."/>
            <person name="Whittaker C.A."/>
            <person name="Kamal M."/>
            <person name="Chang J.L."/>
            <person name="Cuomo C.A."/>
            <person name="Dewar K."/>
            <person name="FitzGerald M.G."/>
            <person name="Kodira C.D."/>
            <person name="Madan A."/>
            <person name="Qin S."/>
            <person name="Yang X."/>
            <person name="Abbasi N."/>
            <person name="Abouelleil A."/>
            <person name="Arachchi H.M."/>
            <person name="Baradarani L."/>
            <person name="Birditt B."/>
            <person name="Bloom S."/>
            <person name="Bloom T."/>
            <person name="Borowsky M.L."/>
            <person name="Burke J."/>
            <person name="Butler J."/>
            <person name="Cook A."/>
            <person name="DeArellano K."/>
            <person name="DeCaprio D."/>
            <person name="Dorris L. III"/>
            <person name="Dors M."/>
            <person name="Eichler E.E."/>
            <person name="Engels R."/>
            <person name="Fahey J."/>
            <person name="Fleetwood P."/>
            <person name="Friedman C."/>
            <person name="Gearin G."/>
            <person name="Hall J.L."/>
            <person name="Hensley G."/>
            <person name="Johnson E."/>
            <person name="Jones C."/>
            <person name="Kamat A."/>
            <person name="Kaur A."/>
            <person name="Locke D.P."/>
            <person name="Madan A."/>
            <person name="Munson G."/>
            <person name="Jaffe D.B."/>
            <person name="Lui A."/>
            <person name="Macdonald P."/>
            <person name="Mauceli E."/>
            <person name="Naylor J.W."/>
            <person name="Nesbitt R."/>
            <person name="Nicol R."/>
            <person name="O'Leary S.B."/>
            <person name="Ratcliffe A."/>
            <person name="Rounsley S."/>
            <person name="She X."/>
            <person name="Sneddon K.M.B."/>
            <person name="Stewart S."/>
            <person name="Sougnez C."/>
            <person name="Stone S.M."/>
            <person name="Topham K."/>
            <person name="Vincent D."/>
            <person name="Wang S."/>
            <person name="Zimmer A.R."/>
            <person name="Birren B.W."/>
            <person name="Hood L."/>
            <person name="Lander E.S."/>
            <person name="Nusbaum C."/>
        </authorList>
    </citation>
    <scope>NUCLEOTIDE SEQUENCE [LARGE SCALE GENOMIC DNA]</scope>
</reference>
<reference key="4">
    <citation type="journal article" date="2003" name="J. Biol. Chem.">
        <title>Role of subunit heteromerization and N-linked glycosylation in the formation of functional hyperpolarization-activated cyclic nucleotide-gated channels.</title>
        <authorList>
            <person name="Much B."/>
            <person name="Wahl-Schott C."/>
            <person name="Zong X."/>
            <person name="Schneider A."/>
            <person name="Baumann L."/>
            <person name="Moosmang S."/>
            <person name="Ludwig A."/>
            <person name="Biel M."/>
        </authorList>
    </citation>
    <scope>SUBUNIT</scope>
</reference>
<reference key="5">
    <citation type="journal article" date="2009" name="J. Hum. Genet.">
        <title>Role of HCN4 channel in preventing ventricular arrhythmia.</title>
        <authorList>
            <person name="Ueda K."/>
            <person name="Hirano Y."/>
            <person name="Higashiuesato Y."/>
            <person name="Aizawa Y."/>
            <person name="Hayashi T."/>
            <person name="Inagaki N."/>
            <person name="Tana T."/>
            <person name="Ohya Y."/>
            <person name="Takishita S."/>
            <person name="Muratani H."/>
            <person name="Hiraoka M."/>
            <person name="Kimura A."/>
        </authorList>
    </citation>
    <scope>FUNCTION</scope>
    <scope>POSSIBLE INVOLVEMENT IN BRGDA8</scope>
</reference>
<reference evidence="24" key="6">
    <citation type="journal article" date="2010" name="J. Biol. Chem.">
        <title>Structural basis for the cAMP-dependent gating in the human HCN4 channel.</title>
        <authorList>
            <person name="Xu X."/>
            <person name="Vysotskaya Z.V."/>
            <person name="Liu Q."/>
            <person name="Zhou L."/>
        </authorList>
    </citation>
    <scope>X-RAY CRYSTALLOGRAPHY (2.4 ANGSTROMS) OF 521-739 IN COMPLEX WITH 3',5'-CYCLIC AMP</scope>
    <scope>NUCLEOTIDE-BINDING</scope>
    <scope>FUNCTION</scope>
    <scope>ACTIVITY REGULATION</scope>
    <scope>SUBUNIT</scope>
</reference>
<reference evidence="25" key="7">
    <citation type="journal article" date="2011" name="J. Biol. Chem.">
        <title>Tetramerization dynamics of C-terminal domain underlies isoform-specific cAMP gating in hyperpolarization-activated cyclic nucleotide-gated channels.</title>
        <authorList>
            <person name="Lolicato M."/>
            <person name="Nardini M."/>
            <person name="Gazzarrini S."/>
            <person name="Moller S."/>
            <person name="Bertinetti D."/>
            <person name="Herberg F.W."/>
            <person name="Bolognesi M."/>
            <person name="Martin H."/>
            <person name="Fasolini M."/>
            <person name="Bertrand J.A."/>
            <person name="Arrigoni C."/>
            <person name="Thiel G."/>
            <person name="Moroni A."/>
        </authorList>
    </citation>
    <scope>X-RAY CRYSTALLOGRAPHY (2.5 ANGSTROMS) OF 521-723 IN COMPLEX WITH 3',5'-CYCLIC AMP</scope>
    <scope>NUCLEOTIDE-BINDING</scope>
    <scope>ACTIVITY REGULATION</scope>
    <scope>SUBUNIT</scope>
</reference>
<reference evidence="26" key="8">
    <citation type="journal article" date="2012" name="Structure">
        <title>Local and global interpretations of a disease-causing mutation near the ligand entry path in hyperpolarization-activated cAMP-gated channel.</title>
        <authorList>
            <person name="Xu X."/>
            <person name="Marni F."/>
            <person name="Wu S."/>
            <person name="Su Z."/>
            <person name="Musayev F."/>
            <person name="Shrestha S."/>
            <person name="Xie C."/>
            <person name="Gao W."/>
            <person name="Liu Q."/>
            <person name="Zhou L."/>
        </authorList>
    </citation>
    <scope>X-RAY CRYSTALLOGRAPHY (2.6 ANGSTROMS) OF 521-724 IN COMPLEX WITH 3',5'-CYCLIC AMP</scope>
    <scope>CHARACTERIZATION OF VARIANT SSS2 ARG-672</scope>
</reference>
<reference evidence="27" key="9">
    <citation type="journal article" date="2014" name="Nat. Chem. Biol.">
        <title>Cyclic dinucleotides bind the C-linker of HCN4 to control channel cAMP responsiveness.</title>
        <authorList>
            <person name="Lolicato M."/>
            <person name="Bucchi A."/>
            <person name="Arrigoni C."/>
            <person name="Zucca S."/>
            <person name="Nardini M."/>
            <person name="Schroeder I."/>
            <person name="Simmons K."/>
            <person name="Aquila M."/>
            <person name="DiFrancesco D."/>
            <person name="Bolognesi M."/>
            <person name="Schwede F."/>
            <person name="Kashin D."/>
            <person name="Fishwick C.W."/>
            <person name="Johnson A.P."/>
            <person name="Thiel G."/>
            <person name="Moroni A."/>
        </authorList>
    </citation>
    <scope>X-RAY CRYSTALLOGRAPHY (2.70 ANGSTROMS) OF 521-713 IN COMPLEX WITH 3',5'-CYCLIC GMP</scope>
    <scope>SUBUNIT</scope>
    <scope>ACTIVITY REGULATION</scope>
    <scope>MUTAGENESIS OF TYR-559; PHE-564; GLU-566 AND ARG-680</scope>
</reference>
<reference evidence="28 29" key="10">
    <citation type="submission" date="2018-06" db="PDB data bank">
        <title>Structure of human HCN4 hyperpolarization-activated cyclic nucleotide-gated ion channel.</title>
        <authorList>
            <person name="Shintre C.A."/>
            <person name="Pike A.C.W."/>
            <person name="Tessitore A."/>
            <person name="Young M."/>
            <person name="Bushell S.R."/>
            <person name="Strain-Damerell C."/>
            <person name="Mukhopadhyay S."/>
            <person name="Burgess-Brown N.A."/>
            <person name="Huiskonen J.T."/>
            <person name="Arrowsmith C.H."/>
            <person name="Edwards A.M."/>
            <person name="Bountra C."/>
            <person name="Carpenter E.P."/>
        </authorList>
    </citation>
    <scope>STRUCTURE BY ELECTRON MICROSCOPY (3.40 ANGSTROMS) OF 201-719</scope>
    <scope>SUBUNIT</scope>
</reference>
<reference key="11">
    <citation type="journal article" date="2016" name="J. Physiol. Sci.">
        <title>The hyperpolarization-activated cyclic nucleotide-gated (HCN) channels contain multiple S-palmitoylation sites.</title>
        <authorList>
            <person name="Itoh M."/>
            <person name="Ishihara K."/>
            <person name="Nakashima N."/>
            <person name="Takano M."/>
        </authorList>
    </citation>
    <scope>PALMITOYLATION</scope>
</reference>
<reference key="12">
    <citation type="journal article" date="2004" name="J. Biol. Chem.">
        <title>Functional characterization of a trafficking-defective HCN4 mutation, D553N, associated with cardiac arrhythmia.</title>
        <authorList>
            <person name="Ueda K."/>
            <person name="Nakamura K."/>
            <person name="Hayashi T."/>
            <person name="Inagaki N."/>
            <person name="Takahashi M."/>
            <person name="Arimura T."/>
            <person name="Morita H."/>
            <person name="Higashiuesato Y."/>
            <person name="Hirano Y."/>
            <person name="Yasunami M."/>
            <person name="Takishita S."/>
            <person name="Yamashina A."/>
            <person name="Ohe T."/>
            <person name="Sunamori M."/>
            <person name="Hiraoka M."/>
            <person name="Kimura A."/>
        </authorList>
    </citation>
    <scope>VARIANT SSS2 ASN-553</scope>
</reference>
<reference key="13">
    <citation type="journal article" date="2006" name="N. Engl. J. Med.">
        <title>Familial sinus bradycardia associated with a mutation in the cardiac pacemaker channel.</title>
        <authorList>
            <person name="Milanesi R."/>
            <person name="Baruscotti M."/>
            <person name="Gnecchi-Ruscone T."/>
            <person name="DiFrancesco D."/>
        </authorList>
    </citation>
    <scope>VARIANT SSS2 ARG-672</scope>
    <scope>FUNCTION</scope>
    <scope>ACTIVITY REGULATION</scope>
    <scope>SUBCELLULAR LOCATION</scope>
    <scope>CHARACTERIZATION OF VARIANT SSS2 ARG-672</scope>
</reference>
<reference key="14">
    <citation type="journal article" date="2010" name="J. Cardiovasc. Electrophysiol.">
        <title>A novel mutation in the HCN4 gene causes symptomatic sinus bradycardia in Moroccan Jews.</title>
        <authorList>
            <person name="Laish-Farkash A."/>
            <person name="Glikson M."/>
            <person name="Brass D."/>
            <person name="Marek-Yagel D."/>
            <person name="Pras E."/>
            <person name="Dascal N."/>
            <person name="Antzelevitch C."/>
            <person name="Nof E."/>
            <person name="Reznik H."/>
            <person name="Eldar M."/>
            <person name="Luria D."/>
        </authorList>
    </citation>
    <scope>VARIANT SSS2 VAL-485</scope>
    <scope>CHARACTERIZATION OF VARIANT SSS2 VAL-485</scope>
</reference>
<reference key="15">
    <citation type="journal article" date="2018" name="Front. Mol. Neurosci.">
        <title>A loss-of-function HCN4 mutation associated with familial benign myoclonic epilepsy in infancy causes increased neuronal excitability.</title>
        <authorList>
            <person name="Campostrini G."/>
            <person name="DiFrancesco J.C."/>
            <person name="Castellotti B."/>
            <person name="Milanesi R."/>
            <person name="Gnecchi-Ruscone T."/>
            <person name="Bonzanni M."/>
            <person name="Bucchi A."/>
            <person name="Baruscotti M."/>
            <person name="Ferrarese C."/>
            <person name="Franceschetti S."/>
            <person name="Canafoglia L."/>
            <person name="Ragona F."/>
            <person name="Freri E."/>
            <person name="Labate A."/>
            <person name="Gambardella A."/>
            <person name="Costa C."/>
            <person name="Gellera C."/>
            <person name="Granata T."/>
            <person name="Barbuti A."/>
            <person name="DiFrancesco D."/>
        </authorList>
    </citation>
    <scope>VARIANT CYS-550</scope>
    <scope>CHARACTERIZATION OF VARIANT CYS-550</scope>
    <scope>INVOLVEMENT IN EIG18</scope>
</reference>
<protein>
    <recommendedName>
        <fullName>Potassium/sodium hyperpolarization-activated cyclic nucleotide-gated channel 4</fullName>
    </recommendedName>
</protein>
<dbReference type="EMBL" id="AJ132429">
    <property type="protein sequence ID" value="CAB42604.1"/>
    <property type="molecule type" value="mRNA"/>
</dbReference>
<dbReference type="EMBL" id="AJ238850">
    <property type="protein sequence ID" value="CAB52754.1"/>
    <property type="molecule type" value="mRNA"/>
</dbReference>
<dbReference type="EMBL" id="AC009660">
    <property type="status" value="NOT_ANNOTATED_CDS"/>
    <property type="molecule type" value="Genomic_DNA"/>
</dbReference>
<dbReference type="EMBL" id="AC068397">
    <property type="status" value="NOT_ANNOTATED_CDS"/>
    <property type="molecule type" value="Genomic_DNA"/>
</dbReference>
<dbReference type="CCDS" id="CCDS10248.1"/>
<dbReference type="RefSeq" id="NP_005468.1">
    <property type="nucleotide sequence ID" value="NM_005477.3"/>
</dbReference>
<dbReference type="PDB" id="2MNG">
    <property type="method" value="NMR"/>
    <property type="chains" value="A=579-707"/>
</dbReference>
<dbReference type="PDB" id="3OTF">
    <property type="method" value="X-ray"/>
    <property type="resolution" value="2.40 A"/>
    <property type="chains" value="A=521-739"/>
</dbReference>
<dbReference type="PDB" id="3U11">
    <property type="method" value="X-ray"/>
    <property type="resolution" value="2.50 A"/>
    <property type="chains" value="A/B=521-723"/>
</dbReference>
<dbReference type="PDB" id="4HBN">
    <property type="method" value="X-ray"/>
    <property type="resolution" value="2.60 A"/>
    <property type="chains" value="A=521-724"/>
</dbReference>
<dbReference type="PDB" id="4KL1">
    <property type="method" value="X-ray"/>
    <property type="resolution" value="2.70 A"/>
    <property type="chains" value="A/B/C/D=521-713"/>
</dbReference>
<dbReference type="PDB" id="4NVP">
    <property type="method" value="X-ray"/>
    <property type="resolution" value="2.50 A"/>
    <property type="chains" value="A=521-723"/>
</dbReference>
<dbReference type="PDB" id="6GYN">
    <property type="method" value="EM"/>
    <property type="resolution" value="3.40 A"/>
    <property type="chains" value="A/B/C/D=201-719"/>
</dbReference>
<dbReference type="PDB" id="6GYO">
    <property type="method" value="EM"/>
    <property type="resolution" value="3.40 A"/>
    <property type="chains" value="A/B/C/D=201-719"/>
</dbReference>
<dbReference type="PDBsum" id="2MNG"/>
<dbReference type="PDBsum" id="3OTF"/>
<dbReference type="PDBsum" id="3U11"/>
<dbReference type="PDBsum" id="4HBN"/>
<dbReference type="PDBsum" id="4KL1"/>
<dbReference type="PDBsum" id="4NVP"/>
<dbReference type="PDBsum" id="6GYN"/>
<dbReference type="PDBsum" id="6GYO"/>
<dbReference type="EMDB" id="EMD-0093"/>
<dbReference type="EMDB" id="EMD-0094"/>
<dbReference type="SMR" id="Q9Y3Q4"/>
<dbReference type="BioGRID" id="115338">
    <property type="interactions" value="5"/>
</dbReference>
<dbReference type="ComplexPortal" id="CPX-131">
    <property type="entry name" value="HCN4 channel complex"/>
</dbReference>
<dbReference type="CORUM" id="Q9Y3Q4"/>
<dbReference type="DIP" id="DIP-52325N"/>
<dbReference type="FunCoup" id="Q9Y3Q4">
    <property type="interactions" value="315"/>
</dbReference>
<dbReference type="IntAct" id="Q9Y3Q4">
    <property type="interactions" value="7"/>
</dbReference>
<dbReference type="STRING" id="9606.ENSP00000261917"/>
<dbReference type="BindingDB" id="Q9Y3Q4"/>
<dbReference type="ChEMBL" id="CHEMBL1250417"/>
<dbReference type="DrugCentral" id="Q9Y3Q4"/>
<dbReference type="GuidetoPHARMACOLOGY" id="403"/>
<dbReference type="TCDB" id="1.A.1.5.10">
    <property type="family name" value="the voltage-gated ion channel (vic) superfamily"/>
</dbReference>
<dbReference type="TCDB" id="1.A.1.5.11">
    <property type="family name" value="the voltage-gated ion channel (vic) superfamily"/>
</dbReference>
<dbReference type="GlyCosmos" id="Q9Y3Q4">
    <property type="glycosylation" value="1 site, No reported glycans"/>
</dbReference>
<dbReference type="GlyGen" id="Q9Y3Q4">
    <property type="glycosylation" value="5 sites, 1 O-linked glycan (1 site)"/>
</dbReference>
<dbReference type="iPTMnet" id="Q9Y3Q4"/>
<dbReference type="PhosphoSitePlus" id="Q9Y3Q4"/>
<dbReference type="SwissPalm" id="Q9Y3Q4"/>
<dbReference type="BioMuta" id="HCN4"/>
<dbReference type="DMDM" id="38605641"/>
<dbReference type="jPOST" id="Q9Y3Q4"/>
<dbReference type="MassIVE" id="Q9Y3Q4"/>
<dbReference type="PaxDb" id="9606-ENSP00000261917"/>
<dbReference type="PeptideAtlas" id="Q9Y3Q4"/>
<dbReference type="ProteomicsDB" id="86060"/>
<dbReference type="ABCD" id="Q9Y3Q4">
    <property type="antibodies" value="1 sequenced antibody"/>
</dbReference>
<dbReference type="Antibodypedia" id="26787">
    <property type="antibodies" value="179 antibodies from 33 providers"/>
</dbReference>
<dbReference type="DNASU" id="10021"/>
<dbReference type="Ensembl" id="ENST00000261917.4">
    <property type="protein sequence ID" value="ENSP00000261917.3"/>
    <property type="gene ID" value="ENSG00000138622.4"/>
</dbReference>
<dbReference type="GeneID" id="10021"/>
<dbReference type="KEGG" id="hsa:10021"/>
<dbReference type="MANE-Select" id="ENST00000261917.4">
    <property type="protein sequence ID" value="ENSP00000261917.3"/>
    <property type="RefSeq nucleotide sequence ID" value="NM_005477.3"/>
    <property type="RefSeq protein sequence ID" value="NP_005468.1"/>
</dbReference>
<dbReference type="UCSC" id="uc002avp.3">
    <property type="organism name" value="human"/>
</dbReference>
<dbReference type="AGR" id="HGNC:16882"/>
<dbReference type="CTD" id="10021"/>
<dbReference type="DisGeNET" id="10021"/>
<dbReference type="GeneCards" id="HCN4"/>
<dbReference type="GeneReviews" id="HCN4"/>
<dbReference type="HGNC" id="HGNC:16882">
    <property type="gene designation" value="HCN4"/>
</dbReference>
<dbReference type="HPA" id="ENSG00000138622">
    <property type="expression patterns" value="Group enriched (heart muscle, testis)"/>
</dbReference>
<dbReference type="MalaCards" id="HCN4"/>
<dbReference type="MIM" id="163800">
    <property type="type" value="phenotype"/>
</dbReference>
<dbReference type="MIM" id="605206">
    <property type="type" value="gene"/>
</dbReference>
<dbReference type="MIM" id="613123">
    <property type="type" value="phenotype"/>
</dbReference>
<dbReference type="MIM" id="619521">
    <property type="type" value="phenotype"/>
</dbReference>
<dbReference type="neXtProt" id="NX_Q9Y3Q4"/>
<dbReference type="OpenTargets" id="ENSG00000138622"/>
<dbReference type="Orphanet" id="130">
    <property type="disease" value="Brugada syndrome"/>
</dbReference>
<dbReference type="Orphanet" id="166282">
    <property type="disease" value="Familial sick sinus syndrome"/>
</dbReference>
<dbReference type="PharmGKB" id="PA394"/>
<dbReference type="VEuPathDB" id="HostDB:ENSG00000138622"/>
<dbReference type="eggNOG" id="KOG0498">
    <property type="taxonomic scope" value="Eukaryota"/>
</dbReference>
<dbReference type="GeneTree" id="ENSGT00940000154743"/>
<dbReference type="HOGENOM" id="CLU_005746_15_0_1"/>
<dbReference type="InParanoid" id="Q9Y3Q4"/>
<dbReference type="OMA" id="FRAQHMT"/>
<dbReference type="OrthoDB" id="421226at2759"/>
<dbReference type="PAN-GO" id="Q9Y3Q4">
    <property type="GO annotations" value="7 GO annotations based on evolutionary models"/>
</dbReference>
<dbReference type="PhylomeDB" id="Q9Y3Q4"/>
<dbReference type="TreeFam" id="TF318250"/>
<dbReference type="PathwayCommons" id="Q9Y3Q4"/>
<dbReference type="Reactome" id="R-HSA-1296061">
    <property type="pathway name" value="HCN channels"/>
</dbReference>
<dbReference type="SignaLink" id="Q9Y3Q4"/>
<dbReference type="SIGNOR" id="Q9Y3Q4"/>
<dbReference type="BioGRID-ORCS" id="10021">
    <property type="hits" value="13 hits in 1141 CRISPR screens"/>
</dbReference>
<dbReference type="ChiTaRS" id="HCN4">
    <property type="organism name" value="human"/>
</dbReference>
<dbReference type="EvolutionaryTrace" id="Q9Y3Q4"/>
<dbReference type="GeneWiki" id="HCN4"/>
<dbReference type="GenomeRNAi" id="10021"/>
<dbReference type="Pharos" id="Q9Y3Q4">
    <property type="development level" value="Tclin"/>
</dbReference>
<dbReference type="PRO" id="PR:Q9Y3Q4"/>
<dbReference type="Proteomes" id="UP000005640">
    <property type="component" value="Chromosome 15"/>
</dbReference>
<dbReference type="RNAct" id="Q9Y3Q4">
    <property type="molecule type" value="protein"/>
</dbReference>
<dbReference type="Bgee" id="ENSG00000138622">
    <property type="expression patterns" value="Expressed in tibialis anterior and 59 other cell types or tissues"/>
</dbReference>
<dbReference type="GO" id="GO:0030424">
    <property type="term" value="C:axon"/>
    <property type="evidence" value="ECO:0000318"/>
    <property type="project" value="GO_Central"/>
</dbReference>
<dbReference type="GO" id="GO:0030425">
    <property type="term" value="C:dendrite"/>
    <property type="evidence" value="ECO:0000318"/>
    <property type="project" value="GO_Central"/>
</dbReference>
<dbReference type="GO" id="GO:0098855">
    <property type="term" value="C:HCN channel complex"/>
    <property type="evidence" value="ECO:0000314"/>
    <property type="project" value="BHF-UCL"/>
</dbReference>
<dbReference type="GO" id="GO:0048471">
    <property type="term" value="C:perinuclear region of cytoplasm"/>
    <property type="evidence" value="ECO:0000314"/>
    <property type="project" value="BHF-UCL"/>
</dbReference>
<dbReference type="GO" id="GO:0005886">
    <property type="term" value="C:plasma membrane"/>
    <property type="evidence" value="ECO:0000314"/>
    <property type="project" value="UniProtKB"/>
</dbReference>
<dbReference type="GO" id="GO:0030552">
    <property type="term" value="F:cAMP binding"/>
    <property type="evidence" value="ECO:0007669"/>
    <property type="project" value="UniProtKB-KW"/>
</dbReference>
<dbReference type="GO" id="GO:0042802">
    <property type="term" value="F:identical protein binding"/>
    <property type="evidence" value="ECO:0000353"/>
    <property type="project" value="IntAct"/>
</dbReference>
<dbReference type="GO" id="GO:0005222">
    <property type="term" value="F:intracellularly cAMP-activated cation channel activity"/>
    <property type="evidence" value="ECO:0000314"/>
    <property type="project" value="UniProtKB"/>
</dbReference>
<dbReference type="GO" id="GO:0005249">
    <property type="term" value="F:voltage-gated potassium channel activity"/>
    <property type="evidence" value="ECO:0000314"/>
    <property type="project" value="UniProtKB"/>
</dbReference>
<dbReference type="GO" id="GO:0086041">
    <property type="term" value="F:voltage-gated potassium channel activity involved in SA node cell action potential depolarization"/>
    <property type="evidence" value="ECO:0000315"/>
    <property type="project" value="BHF-UCL"/>
</dbReference>
<dbReference type="GO" id="GO:0005248">
    <property type="term" value="F:voltage-gated sodium channel activity"/>
    <property type="evidence" value="ECO:0000315"/>
    <property type="project" value="UniProtKB"/>
</dbReference>
<dbReference type="GO" id="GO:0008015">
    <property type="term" value="P:blood circulation"/>
    <property type="evidence" value="ECO:0000303"/>
    <property type="project" value="ProtInc"/>
</dbReference>
<dbReference type="GO" id="GO:0071320">
    <property type="term" value="P:cellular response to cAMP"/>
    <property type="evidence" value="ECO:0000314"/>
    <property type="project" value="UniProtKB"/>
</dbReference>
<dbReference type="GO" id="GO:0071321">
    <property type="term" value="P:cellular response to cGMP"/>
    <property type="evidence" value="ECO:0000314"/>
    <property type="project" value="UniProtKB"/>
</dbReference>
<dbReference type="GO" id="GO:0086012">
    <property type="term" value="P:membrane depolarization during cardiac muscle cell action potential"/>
    <property type="evidence" value="ECO:0000305"/>
    <property type="project" value="BHF-UCL"/>
</dbReference>
<dbReference type="GO" id="GO:0086046">
    <property type="term" value="P:membrane depolarization during SA node cell action potential"/>
    <property type="evidence" value="ECO:0000315"/>
    <property type="project" value="BHF-UCL"/>
</dbReference>
<dbReference type="GO" id="GO:0006812">
    <property type="term" value="P:monoatomic cation transport"/>
    <property type="evidence" value="ECO:0000314"/>
    <property type="project" value="BHF-UCL"/>
</dbReference>
<dbReference type="GO" id="GO:0006936">
    <property type="term" value="P:muscle contraction"/>
    <property type="evidence" value="ECO:0000304"/>
    <property type="project" value="ProtInc"/>
</dbReference>
<dbReference type="GO" id="GO:1990573">
    <property type="term" value="P:potassium ion import across plasma membrane"/>
    <property type="evidence" value="ECO:0000314"/>
    <property type="project" value="BHF-UCL"/>
</dbReference>
<dbReference type="GO" id="GO:0071805">
    <property type="term" value="P:potassium ion transmembrane transport"/>
    <property type="evidence" value="ECO:0000314"/>
    <property type="project" value="UniProtKB"/>
</dbReference>
<dbReference type="GO" id="GO:0098909">
    <property type="term" value="P:regulation of cardiac muscle cell action potential involved in regulation of contraction"/>
    <property type="evidence" value="ECO:0000315"/>
    <property type="project" value="BHF-UCL"/>
</dbReference>
<dbReference type="GO" id="GO:0055117">
    <property type="term" value="P:regulation of cardiac muscle contraction"/>
    <property type="evidence" value="ECO:0000315"/>
    <property type="project" value="BHF-UCL"/>
</dbReference>
<dbReference type="GO" id="GO:0002027">
    <property type="term" value="P:regulation of heart rate"/>
    <property type="evidence" value="ECO:0000315"/>
    <property type="project" value="UniProtKB"/>
</dbReference>
<dbReference type="GO" id="GO:0086091">
    <property type="term" value="P:regulation of heart rate by cardiac conduction"/>
    <property type="evidence" value="ECO:0000315"/>
    <property type="project" value="BHF-UCL"/>
</dbReference>
<dbReference type="GO" id="GO:0003254">
    <property type="term" value="P:regulation of membrane depolarization"/>
    <property type="evidence" value="ECO:0000314"/>
    <property type="project" value="BHF-UCL"/>
</dbReference>
<dbReference type="GO" id="GO:0042391">
    <property type="term" value="P:regulation of membrane potential"/>
    <property type="evidence" value="ECO:0000315"/>
    <property type="project" value="UniProtKB"/>
</dbReference>
<dbReference type="GO" id="GO:0098907">
    <property type="term" value="P:regulation of SA node cell action potential"/>
    <property type="evidence" value="ECO:0000303"/>
    <property type="project" value="ComplexPortal"/>
</dbReference>
<dbReference type="GO" id="GO:0086015">
    <property type="term" value="P:SA node cell action potential"/>
    <property type="evidence" value="ECO:0000315"/>
    <property type="project" value="BHF-UCL"/>
</dbReference>
<dbReference type="GO" id="GO:0003163">
    <property type="term" value="P:sinoatrial node development"/>
    <property type="evidence" value="ECO:0000303"/>
    <property type="project" value="BHF-UCL"/>
</dbReference>
<dbReference type="GO" id="GO:0098719">
    <property type="term" value="P:sodium ion import across plasma membrane"/>
    <property type="evidence" value="ECO:0000314"/>
    <property type="project" value="BHF-UCL"/>
</dbReference>
<dbReference type="GO" id="GO:0035725">
    <property type="term" value="P:sodium ion transmembrane transport"/>
    <property type="evidence" value="ECO:0000315"/>
    <property type="project" value="UniProtKB"/>
</dbReference>
<dbReference type="CDD" id="cd00038">
    <property type="entry name" value="CAP_ED"/>
    <property type="match status" value="1"/>
</dbReference>
<dbReference type="FunFam" id="1.10.287.70:FF:000031">
    <property type="entry name" value="Potassium/sodium hyperpolarization-activated cyclic nucleotide-gated channel 1, putative"/>
    <property type="match status" value="1"/>
</dbReference>
<dbReference type="FunFam" id="1.10.287.630:FF:000002">
    <property type="entry name" value="Potassium/sodium hyperpolarization-activated cyclic nucleotide-gated channel 4"/>
    <property type="match status" value="1"/>
</dbReference>
<dbReference type="FunFam" id="2.60.120.10:FF:000007">
    <property type="entry name" value="Putative potassium/sodium hyperpolarization-activated cyclic nucleotide-gated channel 2"/>
    <property type="match status" value="1"/>
</dbReference>
<dbReference type="Gene3D" id="1.10.287.70">
    <property type="match status" value="1"/>
</dbReference>
<dbReference type="Gene3D" id="1.10.287.630">
    <property type="entry name" value="Helix hairpin bin"/>
    <property type="match status" value="1"/>
</dbReference>
<dbReference type="Gene3D" id="2.60.120.10">
    <property type="entry name" value="Jelly Rolls"/>
    <property type="match status" value="1"/>
</dbReference>
<dbReference type="InterPro" id="IPR018488">
    <property type="entry name" value="cNMP-bd_CS"/>
</dbReference>
<dbReference type="InterPro" id="IPR000595">
    <property type="entry name" value="cNMP-bd_dom"/>
</dbReference>
<dbReference type="InterPro" id="IPR018490">
    <property type="entry name" value="cNMP-bd_dom_sf"/>
</dbReference>
<dbReference type="InterPro" id="IPR005821">
    <property type="entry name" value="Ion_trans_dom"/>
</dbReference>
<dbReference type="InterPro" id="IPR013621">
    <property type="entry name" value="Ion_trans_N"/>
</dbReference>
<dbReference type="InterPro" id="IPR051413">
    <property type="entry name" value="K/Na_HCN_channel"/>
</dbReference>
<dbReference type="InterPro" id="IPR003938">
    <property type="entry name" value="K_chnl_volt-dep_EAG/ELK/ERG"/>
</dbReference>
<dbReference type="InterPro" id="IPR014710">
    <property type="entry name" value="RmlC-like_jellyroll"/>
</dbReference>
<dbReference type="PANTHER" id="PTHR45689">
    <property type="entry name" value="I[[H]] CHANNEL, ISOFORM E"/>
    <property type="match status" value="1"/>
</dbReference>
<dbReference type="PANTHER" id="PTHR45689:SF4">
    <property type="entry name" value="POTASSIUM_SODIUM HYPERPOLARIZATION-ACTIVATED CYCLIC NUCLEOTIDE-GATED CHANNEL 4"/>
    <property type="match status" value="1"/>
</dbReference>
<dbReference type="Pfam" id="PF00027">
    <property type="entry name" value="cNMP_binding"/>
    <property type="match status" value="1"/>
</dbReference>
<dbReference type="Pfam" id="PF00520">
    <property type="entry name" value="Ion_trans"/>
    <property type="match status" value="1"/>
</dbReference>
<dbReference type="Pfam" id="PF08412">
    <property type="entry name" value="Ion_trans_N"/>
    <property type="match status" value="1"/>
</dbReference>
<dbReference type="PRINTS" id="PR01463">
    <property type="entry name" value="EAGCHANLFMLY"/>
</dbReference>
<dbReference type="SMART" id="SM00100">
    <property type="entry name" value="cNMP"/>
    <property type="match status" value="1"/>
</dbReference>
<dbReference type="SUPFAM" id="SSF51206">
    <property type="entry name" value="cAMP-binding domain-like"/>
    <property type="match status" value="1"/>
</dbReference>
<dbReference type="SUPFAM" id="SSF81324">
    <property type="entry name" value="Voltage-gated potassium channels"/>
    <property type="match status" value="1"/>
</dbReference>
<dbReference type="PROSITE" id="PS00888">
    <property type="entry name" value="CNMP_BINDING_1"/>
    <property type="match status" value="1"/>
</dbReference>
<dbReference type="PROSITE" id="PS50042">
    <property type="entry name" value="CNMP_BINDING_3"/>
    <property type="match status" value="1"/>
</dbReference>
<keyword id="KW-0002">3D-structure</keyword>
<keyword id="KW-0992">Brugada syndrome</keyword>
<keyword id="KW-0114">cAMP</keyword>
<keyword id="KW-0116">cAMP-binding</keyword>
<keyword id="KW-1003">Cell membrane</keyword>
<keyword id="KW-0225">Disease variant</keyword>
<keyword id="KW-0887">Epilepsy</keyword>
<keyword id="KW-0325">Glycoprotein</keyword>
<keyword id="KW-0407">Ion channel</keyword>
<keyword id="KW-0406">Ion transport</keyword>
<keyword id="KW-1071">Ligand-gated ion channel</keyword>
<keyword id="KW-0472">Membrane</keyword>
<keyword id="KW-0547">Nucleotide-binding</keyword>
<keyword id="KW-0597">Phosphoprotein</keyword>
<keyword id="KW-0630">Potassium</keyword>
<keyword id="KW-0631">Potassium channel</keyword>
<keyword id="KW-0633">Potassium transport</keyword>
<keyword id="KW-1267">Proteomics identification</keyword>
<keyword id="KW-1185">Reference proteome</keyword>
<keyword id="KW-0915">Sodium</keyword>
<keyword id="KW-0894">Sodium channel</keyword>
<keyword id="KW-0739">Sodium transport</keyword>
<keyword id="KW-0812">Transmembrane</keyword>
<keyword id="KW-1133">Transmembrane helix</keyword>
<keyword id="KW-0813">Transport</keyword>
<keyword id="KW-0851">Voltage-gated channel</keyword>
<accession>Q9Y3Q4</accession>
<accession>Q9UMQ7</accession>